<dbReference type="EC" id="1.14.11.21"/>
<dbReference type="EMBL" id="L06214">
    <property type="protein sequence ID" value="AAA26723.1"/>
    <property type="molecule type" value="Genomic_DNA"/>
</dbReference>
<dbReference type="SMR" id="Q05582"/>
<dbReference type="STRING" id="1901.BB341_07820"/>
<dbReference type="eggNOG" id="COG2175">
    <property type="taxonomic scope" value="Bacteria"/>
</dbReference>
<dbReference type="BioCyc" id="MetaCyc:MONOMER-13487"/>
<dbReference type="BRENDA" id="1.14.11.21">
    <property type="organism ID" value="5988"/>
</dbReference>
<dbReference type="UniPathway" id="UPA00112">
    <property type="reaction ID" value="UER00244"/>
</dbReference>
<dbReference type="UniPathway" id="UPA00112">
    <property type="reaction ID" value="UER00246"/>
</dbReference>
<dbReference type="UniPathway" id="UPA00112">
    <property type="reaction ID" value="UER00247"/>
</dbReference>
<dbReference type="GO" id="GO:0033758">
    <property type="term" value="F:clavaminate synthase activity"/>
    <property type="evidence" value="ECO:0007669"/>
    <property type="project" value="UniProtKB-EC"/>
</dbReference>
<dbReference type="GO" id="GO:0005506">
    <property type="term" value="F:iron ion binding"/>
    <property type="evidence" value="ECO:0007669"/>
    <property type="project" value="InterPro"/>
</dbReference>
<dbReference type="GO" id="GO:0017000">
    <property type="term" value="P:antibiotic biosynthetic process"/>
    <property type="evidence" value="ECO:0007669"/>
    <property type="project" value="UniProtKB-KW"/>
</dbReference>
<dbReference type="GO" id="GO:0033050">
    <property type="term" value="P:clavulanic acid biosynthetic process"/>
    <property type="evidence" value="ECO:0007669"/>
    <property type="project" value="UniProtKB-UniPathway"/>
</dbReference>
<dbReference type="CDD" id="cd00250">
    <property type="entry name" value="CAS_like"/>
    <property type="match status" value="1"/>
</dbReference>
<dbReference type="Gene3D" id="3.60.130.10">
    <property type="entry name" value="Clavaminate synthase-like"/>
    <property type="match status" value="1"/>
</dbReference>
<dbReference type="InterPro" id="IPR050411">
    <property type="entry name" value="AlphaKG_dependent_hydroxylases"/>
</dbReference>
<dbReference type="InterPro" id="IPR014503">
    <property type="entry name" value="Clavaminate_syn-like"/>
</dbReference>
<dbReference type="InterPro" id="IPR053503">
    <property type="entry name" value="Clavaminate_Synthase"/>
</dbReference>
<dbReference type="InterPro" id="IPR042098">
    <property type="entry name" value="TauD-like_sf"/>
</dbReference>
<dbReference type="InterPro" id="IPR003819">
    <property type="entry name" value="TauD/TfdA-like"/>
</dbReference>
<dbReference type="NCBIfam" id="NF043003">
    <property type="entry name" value="ClavSyn_CS1"/>
    <property type="match status" value="1"/>
</dbReference>
<dbReference type="PANTHER" id="PTHR10696">
    <property type="entry name" value="GAMMA-BUTYROBETAINE HYDROXYLASE-RELATED"/>
    <property type="match status" value="1"/>
</dbReference>
<dbReference type="PANTHER" id="PTHR10696:SF56">
    <property type="entry name" value="TAUD_TFDA-LIKE DOMAIN-CONTAINING PROTEIN"/>
    <property type="match status" value="1"/>
</dbReference>
<dbReference type="Pfam" id="PF02668">
    <property type="entry name" value="TauD"/>
    <property type="match status" value="1"/>
</dbReference>
<dbReference type="PIRSF" id="PIRSF019543">
    <property type="entry name" value="Clavaminate_syn"/>
    <property type="match status" value="1"/>
</dbReference>
<dbReference type="SUPFAM" id="SSF51197">
    <property type="entry name" value="Clavaminate synthase-like"/>
    <property type="match status" value="1"/>
</dbReference>
<proteinExistence type="evidence at protein level"/>
<comment type="catalytic activity">
    <reaction>
        <text>deoxyamidinoproclavaminate + 2-oxoglutarate + O2 = amidinoproclavaminate + succinate + CO2</text>
        <dbReference type="Rhea" id="RHEA:20021"/>
        <dbReference type="ChEBI" id="CHEBI:15379"/>
        <dbReference type="ChEBI" id="CHEBI:16526"/>
        <dbReference type="ChEBI" id="CHEBI:16810"/>
        <dbReference type="ChEBI" id="CHEBI:30031"/>
        <dbReference type="ChEBI" id="CHEBI:57303"/>
        <dbReference type="ChEBI" id="CHEBI:58647"/>
        <dbReference type="EC" id="1.14.11.21"/>
    </reaction>
</comment>
<comment type="catalytic activity">
    <reaction>
        <text>proclavaminate + 2-oxoglutarate + O2 = dihydroclavaminate + succinate + CO2 + H2O</text>
        <dbReference type="Rhea" id="RHEA:12773"/>
        <dbReference type="ChEBI" id="CHEBI:15377"/>
        <dbReference type="ChEBI" id="CHEBI:15379"/>
        <dbReference type="ChEBI" id="CHEBI:16526"/>
        <dbReference type="ChEBI" id="CHEBI:16810"/>
        <dbReference type="ChEBI" id="CHEBI:30031"/>
        <dbReference type="ChEBI" id="CHEBI:57301"/>
        <dbReference type="ChEBI" id="CHEBI:57302"/>
        <dbReference type="EC" id="1.14.11.21"/>
    </reaction>
</comment>
<comment type="catalytic activity">
    <reaction>
        <text>dihydroclavaminate + 2-oxoglutarate + O2 = clavaminate + succinate + CO2 + H2O</text>
        <dbReference type="Rhea" id="RHEA:19785"/>
        <dbReference type="ChEBI" id="CHEBI:15377"/>
        <dbReference type="ChEBI" id="CHEBI:15379"/>
        <dbReference type="ChEBI" id="CHEBI:16526"/>
        <dbReference type="ChEBI" id="CHEBI:16810"/>
        <dbReference type="ChEBI" id="CHEBI:30031"/>
        <dbReference type="ChEBI" id="CHEBI:57300"/>
        <dbReference type="ChEBI" id="CHEBI:57301"/>
        <dbReference type="EC" id="1.14.11.21"/>
    </reaction>
</comment>
<comment type="cofactor">
    <cofactor evidence="1">
        <name>Fe(2+)</name>
        <dbReference type="ChEBI" id="CHEBI:29033"/>
    </cofactor>
    <text evidence="1">Binds 1 Fe(2+) ion per subunit.</text>
</comment>
<comment type="pathway">
    <text>Antibiotic biosynthesis; clavulanate biosynthesis; clavulanate from D-glyceraldehyde 3-phosphate and L-arginine: step 3/8.</text>
</comment>
<comment type="pathway">
    <text>Antibiotic biosynthesis; clavulanate biosynthesis; clavulanate from D-glyceraldehyde 3-phosphate and L-arginine: step 5/8.</text>
</comment>
<comment type="pathway">
    <text>Antibiotic biosynthesis; clavulanate biosynthesis; clavulanate from D-glyceraldehyde 3-phosphate and L-arginine: step 6/8.</text>
</comment>
<comment type="similarity">
    <text evidence="3">Belongs to the clavaminate synthase family.</text>
</comment>
<protein>
    <recommendedName>
        <fullName>Clavaminate synthase 2</fullName>
        <ecNumber>1.14.11.21</ecNumber>
    </recommendedName>
    <alternativeName>
        <fullName>Clavaminic acid synthase 2</fullName>
        <shortName>CAS2</shortName>
        <shortName>CS2</shortName>
    </alternativeName>
</protein>
<reference key="1">
    <citation type="journal article" date="1992" name="Biochemistry">
        <title>Two isozymes of clavaminate synthase central to clavulanic acid formation: cloning and sequencing of both genes from Streptomyces clavuligerus.</title>
        <authorList>
            <person name="Marsh E.N."/>
            <person name="Chang M.D.-T."/>
            <person name="Townsend C.A."/>
        </authorList>
    </citation>
    <scope>NUCLEOTIDE SEQUENCE [GENOMIC DNA]</scope>
    <scope>PROTEIN SEQUENCE OF 2-24</scope>
    <source>
        <strain>ATCC 27064 / DSM 738 / JCM 4710 / NBRC 13307 / NCIMB 12785 / NRRL 3585 / VKM Ac-602</strain>
    </source>
</reference>
<reference key="2">
    <citation type="journal article" date="1995" name="J. Biol. Chem.">
        <title>Expression and purification of two isozymes of clavaminate synthase and initial characterization of the iron binding site. General error analysis in polymerase chain reaction amplification.</title>
        <authorList>
            <person name="Busby R.W."/>
            <person name="Chang M.D.-T."/>
            <person name="Busby R.C."/>
            <person name="Wimp J."/>
            <person name="Townsend C.A."/>
        </authorList>
    </citation>
    <scope>CHARACTERIZATION</scope>
    <source>
        <strain>ATCC 27064 / DSM 738 / JCM 4710 / NBRC 13307 / NCIMB 12785 / NRRL 3585 / VKM Ac-602</strain>
    </source>
</reference>
<name>CAS2_STRCL</name>
<keyword id="KW-0045">Antibiotic biosynthesis</keyword>
<keyword id="KW-0903">Direct protein sequencing</keyword>
<keyword id="KW-0408">Iron</keyword>
<keyword id="KW-0479">Metal-binding</keyword>
<keyword id="KW-0560">Oxidoreductase</keyword>
<evidence type="ECO:0000250" key="1"/>
<evidence type="ECO:0000269" key="2">
    <source>
    </source>
</evidence>
<evidence type="ECO:0000305" key="3"/>
<sequence length="325" mass="35840">MASPIVDCTPYRDELLALASELPEVPRADLHGFLDEAKTLAARLPEGLAAALDTFNAVGSEDGYLLLRGLPVDDSELPETPTSTPAPLDRKRLVMEAMRALAGRRLGLHTGYQELRSGTVYHDVYPSPGAHYLSSETSETLLEFHTEMAYHILQPNYVMLACSRADHENRAETLVGSVRKALPLLDEKTRARLFDRKVPCCVDVAFRGGVDDPGAIANVKPLYGDANDPFLGYDRELLAPEDPADKEAVAHLSQALDDVTVGVKLVPGDVLIIDNFRTTHARTPFSPRWDGKDRWLHRVYIRTDRNGELSGGERAGDTISFSPRR</sequence>
<feature type="initiator methionine" description="Removed" evidence="2">
    <location>
        <position position="1"/>
    </location>
</feature>
<feature type="chain" id="PRO_0000089323" description="Clavaminate synthase 2">
    <location>
        <begin position="2"/>
        <end position="325"/>
    </location>
</feature>
<feature type="binding site" evidence="1">
    <location>
        <position position="145"/>
    </location>
    <ligand>
        <name>Fe cation</name>
        <dbReference type="ChEBI" id="CHEBI:24875"/>
    </ligand>
</feature>
<feature type="binding site" evidence="1">
    <location>
        <position position="147"/>
    </location>
    <ligand>
        <name>Fe cation</name>
        <dbReference type="ChEBI" id="CHEBI:24875"/>
    </ligand>
</feature>
<feature type="binding site" evidence="1">
    <location>
        <position position="280"/>
    </location>
    <ligand>
        <name>Fe cation</name>
        <dbReference type="ChEBI" id="CHEBI:24875"/>
    </ligand>
</feature>
<feature type="binding site" evidence="1">
    <location>
        <position position="294"/>
    </location>
    <ligand>
        <name>2-oxoglutarate</name>
        <dbReference type="ChEBI" id="CHEBI:16810"/>
    </ligand>
</feature>
<organism>
    <name type="scientific">Streptomyces clavuligerus</name>
    <dbReference type="NCBI Taxonomy" id="1901"/>
    <lineage>
        <taxon>Bacteria</taxon>
        <taxon>Bacillati</taxon>
        <taxon>Actinomycetota</taxon>
        <taxon>Actinomycetes</taxon>
        <taxon>Kitasatosporales</taxon>
        <taxon>Streptomycetaceae</taxon>
        <taxon>Streptomyces</taxon>
    </lineage>
</organism>
<accession>Q05582</accession>
<gene>
    <name type="primary">cs2</name>
</gene>